<gene>
    <name evidence="1" type="primary">yacG</name>
    <name type="ordered locus">Nmul_A1006</name>
</gene>
<organism>
    <name type="scientific">Nitrosospira multiformis (strain ATCC 25196 / NCIMB 11849 / C 71)</name>
    <dbReference type="NCBI Taxonomy" id="323848"/>
    <lineage>
        <taxon>Bacteria</taxon>
        <taxon>Pseudomonadati</taxon>
        <taxon>Pseudomonadota</taxon>
        <taxon>Betaproteobacteria</taxon>
        <taxon>Nitrosomonadales</taxon>
        <taxon>Nitrosomonadaceae</taxon>
        <taxon>Nitrosospira</taxon>
    </lineage>
</organism>
<name>YACG_NITMU</name>
<proteinExistence type="inferred from homology"/>
<sequence length="65" mass="7362">MKRPVVNCPQCGKSVAWDNSNPFRPFCSERCKLIDLGQWATESYRIPDTGKDSEKQENDPSGSEK</sequence>
<protein>
    <recommendedName>
        <fullName evidence="1">DNA gyrase inhibitor YacG</fullName>
    </recommendedName>
</protein>
<evidence type="ECO:0000255" key="1">
    <source>
        <dbReference type="HAMAP-Rule" id="MF_00649"/>
    </source>
</evidence>
<evidence type="ECO:0000256" key="2">
    <source>
        <dbReference type="SAM" id="MobiDB-lite"/>
    </source>
</evidence>
<keyword id="KW-0479">Metal-binding</keyword>
<keyword id="KW-1185">Reference proteome</keyword>
<keyword id="KW-0862">Zinc</keyword>
<dbReference type="EMBL" id="CP000103">
    <property type="protein sequence ID" value="ABB74309.1"/>
    <property type="molecule type" value="Genomic_DNA"/>
</dbReference>
<dbReference type="RefSeq" id="WP_011380354.1">
    <property type="nucleotide sequence ID" value="NC_007614.1"/>
</dbReference>
<dbReference type="SMR" id="Q2YAB2"/>
<dbReference type="STRING" id="323848.Nmul_A1006"/>
<dbReference type="KEGG" id="nmu:Nmul_A1006"/>
<dbReference type="eggNOG" id="COG3024">
    <property type="taxonomic scope" value="Bacteria"/>
</dbReference>
<dbReference type="HOGENOM" id="CLU_178280_3_2_4"/>
<dbReference type="OrthoDB" id="9809663at2"/>
<dbReference type="Proteomes" id="UP000002718">
    <property type="component" value="Chromosome"/>
</dbReference>
<dbReference type="GO" id="GO:0008657">
    <property type="term" value="F:DNA topoisomerase type II (double strand cut, ATP-hydrolyzing) inhibitor activity"/>
    <property type="evidence" value="ECO:0007669"/>
    <property type="project" value="UniProtKB-UniRule"/>
</dbReference>
<dbReference type="GO" id="GO:0008270">
    <property type="term" value="F:zinc ion binding"/>
    <property type="evidence" value="ECO:0007669"/>
    <property type="project" value="UniProtKB-UniRule"/>
</dbReference>
<dbReference type="GO" id="GO:0006355">
    <property type="term" value="P:regulation of DNA-templated transcription"/>
    <property type="evidence" value="ECO:0007669"/>
    <property type="project" value="InterPro"/>
</dbReference>
<dbReference type="Gene3D" id="3.30.50.10">
    <property type="entry name" value="Erythroid Transcription Factor GATA-1, subunit A"/>
    <property type="match status" value="1"/>
</dbReference>
<dbReference type="HAMAP" id="MF_00649">
    <property type="entry name" value="DNA_gyrase_inhibitor_YacG"/>
    <property type="match status" value="1"/>
</dbReference>
<dbReference type="InterPro" id="IPR005584">
    <property type="entry name" value="DNA_gyrase_inhibitor_YacG"/>
</dbReference>
<dbReference type="InterPro" id="IPR013088">
    <property type="entry name" value="Znf_NHR/GATA"/>
</dbReference>
<dbReference type="NCBIfam" id="NF001638">
    <property type="entry name" value="PRK00418.1"/>
    <property type="match status" value="1"/>
</dbReference>
<dbReference type="PANTHER" id="PTHR36150">
    <property type="entry name" value="DNA GYRASE INHIBITOR YACG"/>
    <property type="match status" value="1"/>
</dbReference>
<dbReference type="PANTHER" id="PTHR36150:SF1">
    <property type="entry name" value="DNA GYRASE INHIBITOR YACG"/>
    <property type="match status" value="1"/>
</dbReference>
<dbReference type="Pfam" id="PF03884">
    <property type="entry name" value="YacG"/>
    <property type="match status" value="1"/>
</dbReference>
<dbReference type="SUPFAM" id="SSF57716">
    <property type="entry name" value="Glucocorticoid receptor-like (DNA-binding domain)"/>
    <property type="match status" value="1"/>
</dbReference>
<accession>Q2YAB2</accession>
<reference key="1">
    <citation type="submission" date="2005-08" db="EMBL/GenBank/DDBJ databases">
        <title>Complete sequence of chromosome 1 of Nitrosospira multiformis ATCC 25196.</title>
        <authorList>
            <person name="Copeland A."/>
            <person name="Lucas S."/>
            <person name="Lapidus A."/>
            <person name="Barry K."/>
            <person name="Detter J.C."/>
            <person name="Glavina T."/>
            <person name="Hammon N."/>
            <person name="Israni S."/>
            <person name="Pitluck S."/>
            <person name="Chain P."/>
            <person name="Malfatti S."/>
            <person name="Shin M."/>
            <person name="Vergez L."/>
            <person name="Schmutz J."/>
            <person name="Larimer F."/>
            <person name="Land M."/>
            <person name="Hauser L."/>
            <person name="Kyrpides N."/>
            <person name="Lykidis A."/>
            <person name="Richardson P."/>
        </authorList>
    </citation>
    <scope>NUCLEOTIDE SEQUENCE [LARGE SCALE GENOMIC DNA]</scope>
    <source>
        <strain>ATCC 25196 / NCIMB 11849 / C 71</strain>
    </source>
</reference>
<comment type="function">
    <text evidence="1">Inhibits all the catalytic activities of DNA gyrase by preventing its interaction with DNA. Acts by binding directly to the C-terminal domain of GyrB, which probably disrupts DNA binding by the gyrase.</text>
</comment>
<comment type="cofactor">
    <cofactor evidence="1">
        <name>Zn(2+)</name>
        <dbReference type="ChEBI" id="CHEBI:29105"/>
    </cofactor>
    <text evidence="1">Binds 1 zinc ion.</text>
</comment>
<comment type="subunit">
    <text evidence="1">Interacts with GyrB.</text>
</comment>
<comment type="similarity">
    <text evidence="1">Belongs to the DNA gyrase inhibitor YacG family.</text>
</comment>
<feature type="chain" id="PRO_1000056980" description="DNA gyrase inhibitor YacG">
    <location>
        <begin position="1"/>
        <end position="65"/>
    </location>
</feature>
<feature type="region of interest" description="Disordered" evidence="2">
    <location>
        <begin position="43"/>
        <end position="65"/>
    </location>
</feature>
<feature type="compositionally biased region" description="Basic and acidic residues" evidence="2">
    <location>
        <begin position="48"/>
        <end position="65"/>
    </location>
</feature>
<feature type="binding site" evidence="1">
    <location>
        <position position="8"/>
    </location>
    <ligand>
        <name>Zn(2+)</name>
        <dbReference type="ChEBI" id="CHEBI:29105"/>
    </ligand>
</feature>
<feature type="binding site" evidence="1">
    <location>
        <position position="11"/>
    </location>
    <ligand>
        <name>Zn(2+)</name>
        <dbReference type="ChEBI" id="CHEBI:29105"/>
    </ligand>
</feature>
<feature type="binding site" evidence="1">
    <location>
        <position position="27"/>
    </location>
    <ligand>
        <name>Zn(2+)</name>
        <dbReference type="ChEBI" id="CHEBI:29105"/>
    </ligand>
</feature>
<feature type="binding site" evidence="1">
    <location>
        <position position="31"/>
    </location>
    <ligand>
        <name>Zn(2+)</name>
        <dbReference type="ChEBI" id="CHEBI:29105"/>
    </ligand>
</feature>